<keyword id="KW-0131">Cell cycle</keyword>
<keyword id="KW-0132">Cell division</keyword>
<keyword id="KW-0195">Cyclin</keyword>
<keyword id="KW-0963">Cytoplasm</keyword>
<keyword id="KW-0472">Membrane</keyword>
<keyword id="KW-0539">Nucleus</keyword>
<keyword id="KW-0597">Phosphoprotein</keyword>
<keyword id="KW-1185">Reference proteome</keyword>
<keyword id="KW-0832">Ubl conjugation</keyword>
<proteinExistence type="evidence at protein level"/>
<organism>
    <name type="scientific">Rattus norvegicus</name>
    <name type="common">Rat</name>
    <dbReference type="NCBI Taxonomy" id="10116"/>
    <lineage>
        <taxon>Eukaryota</taxon>
        <taxon>Metazoa</taxon>
        <taxon>Chordata</taxon>
        <taxon>Craniata</taxon>
        <taxon>Vertebrata</taxon>
        <taxon>Euteleostomi</taxon>
        <taxon>Mammalia</taxon>
        <taxon>Eutheria</taxon>
        <taxon>Euarchontoglires</taxon>
        <taxon>Glires</taxon>
        <taxon>Rodentia</taxon>
        <taxon>Myomorpha</taxon>
        <taxon>Muroidea</taxon>
        <taxon>Muridae</taxon>
        <taxon>Murinae</taxon>
        <taxon>Rattus</taxon>
    </lineage>
</organism>
<sequence length="288" mass="32826">MELLCCEVDPVRRAVPDRNLLEDRVLQNLLTIEERYLPQCSYFKCVQKDIQPYMRRMVATWMLEVCEEQKCEEEVFPLAMNYLDRFLAGVPTPKTHLQLLGAVCMFLASKLKETIPLTAEKLCIYTDNSVKPQELLEWELVVLGKLKWNLAAVTPHDFIEHILRKLPQQKEKLSLIRKHAQTFIALCATDFKFAMYPPSMIATGSVGAAICGLQQDEEVNALTCDALTELLTKITHTDVDCLKACQEQIEAVLLNSLQQFRQEQHNGSKSVEDPDQATTPTDVRDVDL</sequence>
<reference key="1">
    <citation type="journal article" date="1993" name="Oncogene">
        <title>The Vin-1 gene, identified by provirus insertional mutagenesis, is the cyclin D2.</title>
        <authorList>
            <person name="Hanna Z."/>
            <person name="Jankowski M."/>
            <person name="Tremblay P."/>
            <person name="Jiang X.M."/>
            <person name="Milatovich A."/>
            <person name="Francke U."/>
            <person name="Jolicoeur P."/>
        </authorList>
    </citation>
    <scope>NUCLEOTIDE SEQUENCE [MRNA]</scope>
</reference>
<reference key="2">
    <citation type="journal article" date="1994" name="Gene">
        <title>Induction of D2 and D3 cyclin-encoding genes during promotion of the G1/S transition by prolactin in rat Nb2 cells.</title>
        <authorList>
            <person name="Hosokawa Y."/>
            <person name="Onga T."/>
            <person name="Nakashima K."/>
        </authorList>
    </citation>
    <scope>NUCLEOTIDE SEQUENCE [MRNA]</scope>
</reference>
<reference key="3">
    <citation type="journal article" date="2012" name="Nat. Commun.">
        <title>Quantitative maps of protein phosphorylation sites across 14 different rat organs and tissues.</title>
        <authorList>
            <person name="Lundby A."/>
            <person name="Secher A."/>
            <person name="Lage K."/>
            <person name="Nordsborg N.B."/>
            <person name="Dmytriyev A."/>
            <person name="Lundby C."/>
            <person name="Olsen J.V."/>
        </authorList>
    </citation>
    <scope>IDENTIFICATION BY MASS SPECTROMETRY [LARGE SCALE ANALYSIS]</scope>
</reference>
<evidence type="ECO:0000250" key="1">
    <source>
        <dbReference type="UniProtKB" id="P24385"/>
    </source>
</evidence>
<evidence type="ECO:0000250" key="2">
    <source>
        <dbReference type="UniProtKB" id="P30279"/>
    </source>
</evidence>
<evidence type="ECO:0000250" key="3">
    <source>
        <dbReference type="UniProtKB" id="P30280"/>
    </source>
</evidence>
<evidence type="ECO:0000256" key="4">
    <source>
        <dbReference type="SAM" id="MobiDB-lite"/>
    </source>
</evidence>
<evidence type="ECO:0000305" key="5"/>
<feature type="chain" id="PRO_0000080439" description="G1/S-specific cyclin-D2">
    <location>
        <begin position="1"/>
        <end position="288"/>
    </location>
</feature>
<feature type="domain" description="Cyclin N-terminal">
    <location>
        <begin position="26"/>
        <end position="151"/>
    </location>
</feature>
<feature type="region of interest" description="Disordered" evidence="4">
    <location>
        <begin position="264"/>
        <end position="288"/>
    </location>
</feature>
<feature type="modified residue" description="Phosphoserine" evidence="2">
    <location>
        <position position="270"/>
    </location>
</feature>
<feature type="modified residue" description="Phosphothreonine" evidence="3">
    <location>
        <position position="279"/>
    </location>
</feature>
<feature type="sequence conflict" description="In Ref. 2; BAA03815." evidence="5" ref="2">
    <original>E</original>
    <variation>G</variation>
    <location>
        <position position="68"/>
    </location>
</feature>
<feature type="sequence conflict" description="In Ref. 2; BAA03815." evidence="5" ref="2">
    <original>C</original>
    <variation>V</variation>
    <location>
        <position position="104"/>
    </location>
</feature>
<feature type="sequence conflict" description="In Ref. 2; BAA03815." evidence="5" ref="2">
    <original>T</original>
    <variation>A</variation>
    <location>
        <position position="232"/>
    </location>
</feature>
<protein>
    <recommendedName>
        <fullName>G1/S-specific cyclin-D2</fullName>
    </recommendedName>
    <alternativeName>
        <fullName>Vin-1 proto-oncogene</fullName>
    </alternativeName>
</protein>
<name>CCND2_RAT</name>
<comment type="function">
    <text evidence="2">Regulatory component of the cyclin D2-CDK4 (DC) complex that phosphorylates and inhibits members of the retinoblastoma (RB) protein family including RB1 and regulates the cell-cycle during G(1)/S transition. Phosphorylation of RB1 allows dissociation of the transcription factor E2F from the RB/E2F complex and the subsequent transcription of E2F target genes which are responsible for the progression through the G(1) phase. Hypophosphorylates RB1 in early G(1) phase. Cyclin D-CDK4 complexes are major integrators of various mitogenenic and antimitogenic signals.</text>
</comment>
<comment type="subunit">
    <text evidence="2">Interacts with either CDK4 or CDK6 protein kinase to form a serine/threonine kinase holoenzyme complex. The cyclin subunit imparts substrate specificity to the complex.</text>
</comment>
<comment type="subcellular location">
    <subcellularLocation>
        <location evidence="2">Nucleus</location>
    </subcellularLocation>
    <subcellularLocation>
        <location evidence="2">Cytoplasm</location>
    </subcellularLocation>
    <subcellularLocation>
        <location evidence="2">Nucleus membrane</location>
    </subcellularLocation>
    <text evidence="2">Cyclin D-CDK4 complexes accumulate at the nuclear membrane and are then translocated into the nucleus through interaction with KIP/CIP family members.</text>
</comment>
<comment type="PTM">
    <text evidence="1">Phosphorylation at Thr-279 by MAP kinases is required for ubiquitination and degradation by the DCX(AMBRA1) complex.</text>
</comment>
<comment type="PTM">
    <text evidence="2 3">Ubiquitinated by the DCX(AMBRA1) complex during the transition from G1 to S cell phase, leading to its degradation: ubiquitination is dependent on Thr-279 phosphorylation. The DCX(AMBRA1) complex represents the major regulator of CCND2 stability during the G1/S transition (By similarity). Polyubiquitinated by the SCF(FBXL2) complex, leading to proteasomal degradation (By similarity).</text>
</comment>
<comment type="similarity">
    <text evidence="5">Belongs to the cyclin family. Cyclin D subfamily.</text>
</comment>
<dbReference type="EMBL" id="L09752">
    <property type="protein sequence ID" value="AAA41010.1"/>
    <property type="molecule type" value="mRNA"/>
</dbReference>
<dbReference type="EMBL" id="D16308">
    <property type="protein sequence ID" value="BAA03815.1"/>
    <property type="molecule type" value="mRNA"/>
</dbReference>
<dbReference type="PIR" id="I58372">
    <property type="entry name" value="I58372"/>
</dbReference>
<dbReference type="PIR" id="JC4011">
    <property type="entry name" value="JC4011"/>
</dbReference>
<dbReference type="RefSeq" id="NP_071603.1">
    <property type="nucleotide sequence ID" value="NM_022267.1"/>
</dbReference>
<dbReference type="SMR" id="Q04827"/>
<dbReference type="BioGRID" id="248951">
    <property type="interactions" value="3"/>
</dbReference>
<dbReference type="ComplexPortal" id="CPX-2076">
    <property type="entry name" value="Cyclin D2-CDK4 complex"/>
</dbReference>
<dbReference type="FunCoup" id="Q04827">
    <property type="interactions" value="1225"/>
</dbReference>
<dbReference type="STRING" id="10116.ENSRNOP00000073319"/>
<dbReference type="PhosphoSitePlus" id="Q04827"/>
<dbReference type="PaxDb" id="10116-ENSRNOP00000027084"/>
<dbReference type="GeneID" id="64033"/>
<dbReference type="KEGG" id="rno:64033"/>
<dbReference type="UCSC" id="RGD:621083">
    <property type="organism name" value="rat"/>
</dbReference>
<dbReference type="AGR" id="RGD:621083"/>
<dbReference type="CTD" id="894"/>
<dbReference type="RGD" id="621083">
    <property type="gene designation" value="Ccnd2"/>
</dbReference>
<dbReference type="eggNOG" id="KOG0656">
    <property type="taxonomic scope" value="Eukaryota"/>
</dbReference>
<dbReference type="InParanoid" id="Q04827"/>
<dbReference type="OrthoDB" id="306099at2759"/>
<dbReference type="PhylomeDB" id="Q04827"/>
<dbReference type="Reactome" id="R-RNO-69231">
    <property type="pathway name" value="Cyclin D associated events in G1"/>
</dbReference>
<dbReference type="Reactome" id="R-RNO-8934593">
    <property type="pathway name" value="Regulation of RUNX1 Expression and Activity"/>
</dbReference>
<dbReference type="Reactome" id="R-RNO-9754119">
    <property type="pathway name" value="Drug-mediated inhibition of CDK4/CDK6 activity"/>
</dbReference>
<dbReference type="PRO" id="PR:Q04827"/>
<dbReference type="Proteomes" id="UP000002494">
    <property type="component" value="Unplaced"/>
</dbReference>
<dbReference type="GO" id="GO:0000785">
    <property type="term" value="C:chromatin"/>
    <property type="evidence" value="ECO:0000266"/>
    <property type="project" value="RGD"/>
</dbReference>
<dbReference type="GO" id="GO:0097129">
    <property type="term" value="C:cyclin D2-CDK4 complex"/>
    <property type="evidence" value="ECO:0000266"/>
    <property type="project" value="RGD"/>
</dbReference>
<dbReference type="GO" id="GO:0000307">
    <property type="term" value="C:cyclin-dependent protein kinase holoenzyme complex"/>
    <property type="evidence" value="ECO:0000266"/>
    <property type="project" value="RGD"/>
</dbReference>
<dbReference type="GO" id="GO:0005737">
    <property type="term" value="C:cytoplasm"/>
    <property type="evidence" value="ECO:0000318"/>
    <property type="project" value="GO_Central"/>
</dbReference>
<dbReference type="GO" id="GO:0005829">
    <property type="term" value="C:cytosol"/>
    <property type="evidence" value="ECO:0000266"/>
    <property type="project" value="RGD"/>
</dbReference>
<dbReference type="GO" id="GO:0005815">
    <property type="term" value="C:microtubule organizing center"/>
    <property type="evidence" value="ECO:0000318"/>
    <property type="project" value="GO_Central"/>
</dbReference>
<dbReference type="GO" id="GO:0031965">
    <property type="term" value="C:nuclear membrane"/>
    <property type="evidence" value="ECO:0000266"/>
    <property type="project" value="RGD"/>
</dbReference>
<dbReference type="GO" id="GO:0005730">
    <property type="term" value="C:nucleolus"/>
    <property type="evidence" value="ECO:0000266"/>
    <property type="project" value="RGD"/>
</dbReference>
<dbReference type="GO" id="GO:0005634">
    <property type="term" value="C:nucleus"/>
    <property type="evidence" value="ECO:0000266"/>
    <property type="project" value="RGD"/>
</dbReference>
<dbReference type="GO" id="GO:0061575">
    <property type="term" value="F:cyclin-dependent protein serine/threonine kinase activator activity"/>
    <property type="evidence" value="ECO:0000266"/>
    <property type="project" value="RGD"/>
</dbReference>
<dbReference type="GO" id="GO:0016538">
    <property type="term" value="F:cyclin-dependent protein serine/threonine kinase regulator activity"/>
    <property type="evidence" value="ECO:0000318"/>
    <property type="project" value="GO_Central"/>
</dbReference>
<dbReference type="GO" id="GO:0019901">
    <property type="term" value="F:protein kinase binding"/>
    <property type="evidence" value="ECO:0000353"/>
    <property type="project" value="RGD"/>
</dbReference>
<dbReference type="GO" id="GO:0043539">
    <property type="term" value="F:protein serine/threonine kinase activator activity"/>
    <property type="evidence" value="ECO:0000266"/>
    <property type="project" value="RGD"/>
</dbReference>
<dbReference type="GO" id="GO:0008344">
    <property type="term" value="P:adult locomotory behavior"/>
    <property type="evidence" value="ECO:0000266"/>
    <property type="project" value="RGD"/>
</dbReference>
<dbReference type="GO" id="GO:0051301">
    <property type="term" value="P:cell division"/>
    <property type="evidence" value="ECO:0007669"/>
    <property type="project" value="UniProtKB-KW"/>
</dbReference>
<dbReference type="GO" id="GO:0071549">
    <property type="term" value="P:cellular response to dexamethasone stimulus"/>
    <property type="evidence" value="ECO:0000270"/>
    <property type="project" value="RGD"/>
</dbReference>
<dbReference type="GO" id="GO:0071372">
    <property type="term" value="P:cellular response to follicle-stimulating hormone stimulus"/>
    <property type="evidence" value="ECO:0000270"/>
    <property type="project" value="RGD"/>
</dbReference>
<dbReference type="GO" id="GO:0071378">
    <property type="term" value="P:cellular response to growth hormone stimulus"/>
    <property type="evidence" value="ECO:0000270"/>
    <property type="project" value="RGD"/>
</dbReference>
<dbReference type="GO" id="GO:0032869">
    <property type="term" value="P:cellular response to insulin stimulus"/>
    <property type="evidence" value="ECO:0000270"/>
    <property type="project" value="RGD"/>
</dbReference>
<dbReference type="GO" id="GO:0071394">
    <property type="term" value="P:cellular response to testosterone stimulus"/>
    <property type="evidence" value="ECO:0000270"/>
    <property type="project" value="RGD"/>
</dbReference>
<dbReference type="GO" id="GO:0071481">
    <property type="term" value="P:cellular response to X-ray"/>
    <property type="evidence" value="ECO:0000266"/>
    <property type="project" value="RGD"/>
</dbReference>
<dbReference type="GO" id="GO:0000082">
    <property type="term" value="P:G1/S transition of mitotic cell cycle"/>
    <property type="evidence" value="ECO:0000315"/>
    <property type="project" value="RGD"/>
</dbReference>
<dbReference type="GO" id="GO:0001889">
    <property type="term" value="P:liver development"/>
    <property type="evidence" value="ECO:0000270"/>
    <property type="project" value="RGD"/>
</dbReference>
<dbReference type="GO" id="GO:0007616">
    <property type="term" value="P:long-term memory"/>
    <property type="evidence" value="ECO:0000266"/>
    <property type="project" value="RGD"/>
</dbReference>
<dbReference type="GO" id="GO:0043066">
    <property type="term" value="P:negative regulation of apoptotic process"/>
    <property type="evidence" value="ECO:0000266"/>
    <property type="project" value="RGD"/>
</dbReference>
<dbReference type="GO" id="GO:2000726">
    <property type="term" value="P:negative regulation of cardiac muscle cell differentiation"/>
    <property type="evidence" value="ECO:0000314"/>
    <property type="project" value="RGD"/>
</dbReference>
<dbReference type="GO" id="GO:0001541">
    <property type="term" value="P:ovarian follicle development"/>
    <property type="evidence" value="ECO:0000270"/>
    <property type="project" value="RGD"/>
</dbReference>
<dbReference type="GO" id="GO:0060045">
    <property type="term" value="P:positive regulation of cardiac muscle cell proliferation"/>
    <property type="evidence" value="ECO:0000314"/>
    <property type="project" value="RGD"/>
</dbReference>
<dbReference type="GO" id="GO:0008284">
    <property type="term" value="P:positive regulation of cell population proliferation"/>
    <property type="evidence" value="ECO:0000315"/>
    <property type="project" value="RGD"/>
</dbReference>
<dbReference type="GO" id="GO:0050679">
    <property type="term" value="P:positive regulation of epithelial cell proliferation"/>
    <property type="evidence" value="ECO:0000315"/>
    <property type="project" value="RGD"/>
</dbReference>
<dbReference type="GO" id="GO:1900087">
    <property type="term" value="P:positive regulation of G1/S transition of mitotic cell cycle"/>
    <property type="evidence" value="ECO:0000266"/>
    <property type="project" value="RGD"/>
</dbReference>
<dbReference type="GO" id="GO:0051726">
    <property type="term" value="P:regulation of cell cycle"/>
    <property type="evidence" value="ECO:0000266"/>
    <property type="project" value="RGD"/>
</dbReference>
<dbReference type="GO" id="GO:0045664">
    <property type="term" value="P:regulation of neuron differentiation"/>
    <property type="evidence" value="ECO:0000270"/>
    <property type="project" value="RGD"/>
</dbReference>
<dbReference type="GO" id="GO:0051591">
    <property type="term" value="P:response to cAMP"/>
    <property type="evidence" value="ECO:0000270"/>
    <property type="project" value="RGD"/>
</dbReference>
<dbReference type="GO" id="GO:0032355">
    <property type="term" value="P:response to estradiol"/>
    <property type="evidence" value="ECO:0000270"/>
    <property type="project" value="RGD"/>
</dbReference>
<dbReference type="GO" id="GO:0043627">
    <property type="term" value="P:response to estrogen"/>
    <property type="evidence" value="ECO:0000270"/>
    <property type="project" value="RGD"/>
</dbReference>
<dbReference type="GO" id="GO:0045471">
    <property type="term" value="P:response to ethanol"/>
    <property type="evidence" value="ECO:0000270"/>
    <property type="project" value="RGD"/>
</dbReference>
<dbReference type="GO" id="GO:0032354">
    <property type="term" value="P:response to follicle-stimulating hormone"/>
    <property type="evidence" value="ECO:0000270"/>
    <property type="project" value="RGD"/>
</dbReference>
<dbReference type="GO" id="GO:0033595">
    <property type="term" value="P:response to genistein"/>
    <property type="evidence" value="ECO:0000270"/>
    <property type="project" value="RGD"/>
</dbReference>
<dbReference type="GO" id="GO:0044752">
    <property type="term" value="P:response to human chorionic gonadotropin"/>
    <property type="evidence" value="ECO:0000270"/>
    <property type="project" value="RGD"/>
</dbReference>
<dbReference type="GO" id="GO:0043434">
    <property type="term" value="P:response to peptide hormone"/>
    <property type="evidence" value="ECO:0000270"/>
    <property type="project" value="RGD"/>
</dbReference>
<dbReference type="GO" id="GO:0033574">
    <property type="term" value="P:response to testosterone"/>
    <property type="evidence" value="ECO:0000270"/>
    <property type="project" value="RGD"/>
</dbReference>
<dbReference type="GO" id="GO:0007283">
    <property type="term" value="P:spermatogenesis"/>
    <property type="evidence" value="ECO:0000270"/>
    <property type="project" value="RGD"/>
</dbReference>
<dbReference type="CDD" id="cd20577">
    <property type="entry name" value="CYCLIN_CCND2_rpt2"/>
    <property type="match status" value="1"/>
</dbReference>
<dbReference type="FunFam" id="1.10.472.10:FF:000012">
    <property type="entry name" value="G1/S-specific cyclin-D1"/>
    <property type="match status" value="1"/>
</dbReference>
<dbReference type="FunFam" id="1.10.472.10:FF:000120">
    <property type="entry name" value="G1/S-specific cyclin-D1"/>
    <property type="match status" value="1"/>
</dbReference>
<dbReference type="Gene3D" id="1.10.472.10">
    <property type="entry name" value="Cyclin-like"/>
    <property type="match status" value="2"/>
</dbReference>
<dbReference type="InterPro" id="IPR039361">
    <property type="entry name" value="Cyclin"/>
</dbReference>
<dbReference type="InterPro" id="IPR013763">
    <property type="entry name" value="Cyclin-like_dom"/>
</dbReference>
<dbReference type="InterPro" id="IPR036915">
    <property type="entry name" value="Cyclin-like_sf"/>
</dbReference>
<dbReference type="InterPro" id="IPR004367">
    <property type="entry name" value="Cyclin_C-dom"/>
</dbReference>
<dbReference type="InterPro" id="IPR006671">
    <property type="entry name" value="Cyclin_N"/>
</dbReference>
<dbReference type="InterPro" id="IPR048258">
    <property type="entry name" value="Cyclins_cyclin-box"/>
</dbReference>
<dbReference type="PANTHER" id="PTHR10177">
    <property type="entry name" value="CYCLINS"/>
    <property type="match status" value="1"/>
</dbReference>
<dbReference type="Pfam" id="PF02984">
    <property type="entry name" value="Cyclin_C"/>
    <property type="match status" value="1"/>
</dbReference>
<dbReference type="Pfam" id="PF00134">
    <property type="entry name" value="Cyclin_N"/>
    <property type="match status" value="1"/>
</dbReference>
<dbReference type="SMART" id="SM00385">
    <property type="entry name" value="CYCLIN"/>
    <property type="match status" value="1"/>
</dbReference>
<dbReference type="SMART" id="SM01332">
    <property type="entry name" value="Cyclin_C"/>
    <property type="match status" value="1"/>
</dbReference>
<dbReference type="SUPFAM" id="SSF47954">
    <property type="entry name" value="Cyclin-like"/>
    <property type="match status" value="2"/>
</dbReference>
<dbReference type="PROSITE" id="PS00292">
    <property type="entry name" value="CYCLINS"/>
    <property type="match status" value="1"/>
</dbReference>
<gene>
    <name type="primary">Ccnd2</name>
    <name type="synonym">Vin-1</name>
</gene>
<accession>Q04827</accession>